<dbReference type="EC" id="5.4.99.25" evidence="1"/>
<dbReference type="EMBL" id="CP000436">
    <property type="protein sequence ID" value="ABI25098.1"/>
    <property type="molecule type" value="Genomic_DNA"/>
</dbReference>
<dbReference type="SMR" id="Q0I3P3"/>
<dbReference type="KEGG" id="hso:HS_0823"/>
<dbReference type="eggNOG" id="COG0130">
    <property type="taxonomic scope" value="Bacteria"/>
</dbReference>
<dbReference type="HOGENOM" id="CLU_032087_0_3_6"/>
<dbReference type="GO" id="GO:0003723">
    <property type="term" value="F:RNA binding"/>
    <property type="evidence" value="ECO:0007669"/>
    <property type="project" value="InterPro"/>
</dbReference>
<dbReference type="GO" id="GO:0160148">
    <property type="term" value="F:tRNA pseudouridine(55) synthase activity"/>
    <property type="evidence" value="ECO:0007669"/>
    <property type="project" value="UniProtKB-EC"/>
</dbReference>
<dbReference type="GO" id="GO:1990481">
    <property type="term" value="P:mRNA pseudouridine synthesis"/>
    <property type="evidence" value="ECO:0007669"/>
    <property type="project" value="TreeGrafter"/>
</dbReference>
<dbReference type="GO" id="GO:0031119">
    <property type="term" value="P:tRNA pseudouridine synthesis"/>
    <property type="evidence" value="ECO:0007669"/>
    <property type="project" value="UniProtKB-UniRule"/>
</dbReference>
<dbReference type="CDD" id="cd02573">
    <property type="entry name" value="PseudoU_synth_EcTruB"/>
    <property type="match status" value="1"/>
</dbReference>
<dbReference type="CDD" id="cd21152">
    <property type="entry name" value="PUA_TruB_bacterial"/>
    <property type="match status" value="1"/>
</dbReference>
<dbReference type="FunFam" id="3.30.2350.10:FF:000003">
    <property type="entry name" value="tRNA pseudouridine synthase B"/>
    <property type="match status" value="1"/>
</dbReference>
<dbReference type="Gene3D" id="3.30.2350.10">
    <property type="entry name" value="Pseudouridine synthase"/>
    <property type="match status" value="1"/>
</dbReference>
<dbReference type="Gene3D" id="2.30.130.10">
    <property type="entry name" value="PUA domain"/>
    <property type="match status" value="1"/>
</dbReference>
<dbReference type="HAMAP" id="MF_01080">
    <property type="entry name" value="TruB_bact"/>
    <property type="match status" value="1"/>
</dbReference>
<dbReference type="InterPro" id="IPR020103">
    <property type="entry name" value="PsdUridine_synth_cat_dom_sf"/>
</dbReference>
<dbReference type="InterPro" id="IPR002501">
    <property type="entry name" value="PsdUridine_synth_N"/>
</dbReference>
<dbReference type="InterPro" id="IPR015947">
    <property type="entry name" value="PUA-like_sf"/>
</dbReference>
<dbReference type="InterPro" id="IPR036974">
    <property type="entry name" value="PUA_sf"/>
</dbReference>
<dbReference type="InterPro" id="IPR014780">
    <property type="entry name" value="tRNA_psdUridine_synth_TruB"/>
</dbReference>
<dbReference type="InterPro" id="IPR015240">
    <property type="entry name" value="tRNA_sdUridine_synth_fam1_C"/>
</dbReference>
<dbReference type="InterPro" id="IPR032819">
    <property type="entry name" value="TruB_C"/>
</dbReference>
<dbReference type="NCBIfam" id="TIGR00431">
    <property type="entry name" value="TruB"/>
    <property type="match status" value="1"/>
</dbReference>
<dbReference type="PANTHER" id="PTHR13767:SF2">
    <property type="entry name" value="PSEUDOURIDYLATE SYNTHASE TRUB1"/>
    <property type="match status" value="1"/>
</dbReference>
<dbReference type="PANTHER" id="PTHR13767">
    <property type="entry name" value="TRNA-PSEUDOURIDINE SYNTHASE"/>
    <property type="match status" value="1"/>
</dbReference>
<dbReference type="Pfam" id="PF09157">
    <property type="entry name" value="TruB-C_2"/>
    <property type="match status" value="1"/>
</dbReference>
<dbReference type="Pfam" id="PF16198">
    <property type="entry name" value="TruB_C_2"/>
    <property type="match status" value="1"/>
</dbReference>
<dbReference type="Pfam" id="PF01509">
    <property type="entry name" value="TruB_N"/>
    <property type="match status" value="1"/>
</dbReference>
<dbReference type="SUPFAM" id="SSF55120">
    <property type="entry name" value="Pseudouridine synthase"/>
    <property type="match status" value="1"/>
</dbReference>
<dbReference type="SUPFAM" id="SSF88697">
    <property type="entry name" value="PUA domain-like"/>
    <property type="match status" value="1"/>
</dbReference>
<accession>Q0I3P3</accession>
<keyword id="KW-0413">Isomerase</keyword>
<keyword id="KW-0819">tRNA processing</keyword>
<comment type="function">
    <text evidence="1">Responsible for synthesis of pseudouridine from uracil-55 in the psi GC loop of transfer RNAs.</text>
</comment>
<comment type="catalytic activity">
    <reaction evidence="1">
        <text>uridine(55) in tRNA = pseudouridine(55) in tRNA</text>
        <dbReference type="Rhea" id="RHEA:42532"/>
        <dbReference type="Rhea" id="RHEA-COMP:10101"/>
        <dbReference type="Rhea" id="RHEA-COMP:10102"/>
        <dbReference type="ChEBI" id="CHEBI:65314"/>
        <dbReference type="ChEBI" id="CHEBI:65315"/>
        <dbReference type="EC" id="5.4.99.25"/>
    </reaction>
</comment>
<comment type="similarity">
    <text evidence="1">Belongs to the pseudouridine synthase TruB family. Type 1 subfamily.</text>
</comment>
<evidence type="ECO:0000255" key="1">
    <source>
        <dbReference type="HAMAP-Rule" id="MF_01080"/>
    </source>
</evidence>
<organism>
    <name type="scientific">Histophilus somni (strain 129Pt)</name>
    <name type="common">Haemophilus somnus</name>
    <dbReference type="NCBI Taxonomy" id="205914"/>
    <lineage>
        <taxon>Bacteria</taxon>
        <taxon>Pseudomonadati</taxon>
        <taxon>Pseudomonadota</taxon>
        <taxon>Gammaproteobacteria</taxon>
        <taxon>Pasteurellales</taxon>
        <taxon>Pasteurellaceae</taxon>
        <taxon>Histophilus</taxon>
    </lineage>
</organism>
<proteinExistence type="inferred from homology"/>
<sequence>MSKPRKKGRDINGIFLLDKSQGMSSNDIMQKVKRLFQANKAGHTGALDPLATGMLPICLGEATKFSQYLLDADKRYQVIAKLGERTDTSDADGQVVQKREVNIDLAKILTALEQFRGEIMQVPTMFSALKYQGKALYEYARAGITIEREARPISIFELKFIDYQIPYLTLEVHCSKGTYIRTLVDDLGEVLGCGAHVTRLRRIAVADYPYNKMMTLEQLQQFSEQEDLDLLDQHLLPMESAVIRLPGLHLTKEQARAVGFGQRIKFLNEQGIQGQVRLISPENLFLGVAVIDENSIVHPQRMVVIKPE</sequence>
<gene>
    <name evidence="1" type="primary">truB</name>
    <name type="ordered locus">HS_0823</name>
</gene>
<reference key="1">
    <citation type="journal article" date="2007" name="J. Bacteriol.">
        <title>Complete genome sequence of Haemophilus somnus (Histophilus somni) strain 129Pt and comparison to Haemophilus ducreyi 35000HP and Haemophilus influenzae Rd.</title>
        <authorList>
            <person name="Challacombe J.F."/>
            <person name="Duncan A.J."/>
            <person name="Brettin T.S."/>
            <person name="Bruce D."/>
            <person name="Chertkov O."/>
            <person name="Detter J.C."/>
            <person name="Han C.S."/>
            <person name="Misra M."/>
            <person name="Richardson P."/>
            <person name="Tapia R."/>
            <person name="Thayer N."/>
            <person name="Xie G."/>
            <person name="Inzana T.J."/>
        </authorList>
    </citation>
    <scope>NUCLEOTIDE SEQUENCE [LARGE SCALE GENOMIC DNA]</scope>
    <source>
        <strain>129Pt</strain>
    </source>
</reference>
<name>TRUB_HISS1</name>
<protein>
    <recommendedName>
        <fullName evidence="1">tRNA pseudouridine synthase B</fullName>
        <ecNumber evidence="1">5.4.99.25</ecNumber>
    </recommendedName>
    <alternativeName>
        <fullName evidence="1">tRNA pseudouridine(55) synthase</fullName>
        <shortName evidence="1">Psi55 synthase</shortName>
    </alternativeName>
    <alternativeName>
        <fullName evidence="1">tRNA pseudouridylate synthase</fullName>
    </alternativeName>
    <alternativeName>
        <fullName evidence="1">tRNA-uridine isomerase</fullName>
    </alternativeName>
</protein>
<feature type="chain" id="PRO_1000084604" description="tRNA pseudouridine synthase B">
    <location>
        <begin position="1"/>
        <end position="308"/>
    </location>
</feature>
<feature type="active site" description="Nucleophile" evidence="1">
    <location>
        <position position="48"/>
    </location>
</feature>